<keyword id="KW-0997">Cell inner membrane</keyword>
<keyword id="KW-1003">Cell membrane</keyword>
<keyword id="KW-0378">Hydrolase</keyword>
<keyword id="KW-0472">Membrane</keyword>
<keyword id="KW-0479">Metal-binding</keyword>
<keyword id="KW-0482">Metalloprotease</keyword>
<keyword id="KW-0645">Protease</keyword>
<keyword id="KW-1185">Reference proteome</keyword>
<keyword id="KW-0812">Transmembrane</keyword>
<keyword id="KW-1133">Transmembrane helix</keyword>
<keyword id="KW-0862">Zinc</keyword>
<evidence type="ECO:0000255" key="1">
    <source>
        <dbReference type="HAMAP-Rule" id="MF_00188"/>
    </source>
</evidence>
<reference key="1">
    <citation type="journal article" date="2011" name="Stand. Genomic Sci.">
        <title>Complete genome sequence of Rhodospirillum rubrum type strain (S1).</title>
        <authorList>
            <person name="Munk A.C."/>
            <person name="Copeland A."/>
            <person name="Lucas S."/>
            <person name="Lapidus A."/>
            <person name="Del Rio T.G."/>
            <person name="Barry K."/>
            <person name="Detter J.C."/>
            <person name="Hammon N."/>
            <person name="Israni S."/>
            <person name="Pitluck S."/>
            <person name="Brettin T."/>
            <person name="Bruce D."/>
            <person name="Han C."/>
            <person name="Tapia R."/>
            <person name="Gilna P."/>
            <person name="Schmutz J."/>
            <person name="Larimer F."/>
            <person name="Land M."/>
            <person name="Kyrpides N.C."/>
            <person name="Mavromatis K."/>
            <person name="Richardson P."/>
            <person name="Rohde M."/>
            <person name="Goeker M."/>
            <person name="Klenk H.P."/>
            <person name="Zhang Y."/>
            <person name="Roberts G.P."/>
            <person name="Reslewic S."/>
            <person name="Schwartz D.C."/>
        </authorList>
    </citation>
    <scope>NUCLEOTIDE SEQUENCE [LARGE SCALE GENOMIC DNA]</scope>
    <source>
        <strain>ATCC 11170 / ATH 1.1.1 / DSM 467 / LMG 4362 / NCIMB 8255 / S1</strain>
    </source>
</reference>
<proteinExistence type="inferred from homology"/>
<name>HTPX_RHORT</name>
<feature type="chain" id="PRO_1000020926" description="Protease HtpX homolog">
    <location>
        <begin position="1"/>
        <end position="293"/>
    </location>
</feature>
<feature type="transmembrane region" description="Helical" evidence="1">
    <location>
        <begin position="6"/>
        <end position="26"/>
    </location>
</feature>
<feature type="transmembrane region" description="Helical" evidence="1">
    <location>
        <begin position="28"/>
        <end position="48"/>
    </location>
</feature>
<feature type="transmembrane region" description="Helical" evidence="1">
    <location>
        <begin position="145"/>
        <end position="165"/>
    </location>
</feature>
<feature type="transmembrane region" description="Helical" evidence="1">
    <location>
        <begin position="172"/>
        <end position="192"/>
    </location>
</feature>
<feature type="active site" evidence="1">
    <location>
        <position position="131"/>
    </location>
</feature>
<feature type="binding site" evidence="1">
    <location>
        <position position="130"/>
    </location>
    <ligand>
        <name>Zn(2+)</name>
        <dbReference type="ChEBI" id="CHEBI:29105"/>
        <note>catalytic</note>
    </ligand>
</feature>
<feature type="binding site" evidence="1">
    <location>
        <position position="134"/>
    </location>
    <ligand>
        <name>Zn(2+)</name>
        <dbReference type="ChEBI" id="CHEBI:29105"/>
        <note>catalytic</note>
    </ligand>
</feature>
<feature type="binding site" evidence="1">
    <location>
        <position position="201"/>
    </location>
    <ligand>
        <name>Zn(2+)</name>
        <dbReference type="ChEBI" id="CHEBI:29105"/>
        <note>catalytic</note>
    </ligand>
</feature>
<comment type="cofactor">
    <cofactor evidence="1">
        <name>Zn(2+)</name>
        <dbReference type="ChEBI" id="CHEBI:29105"/>
    </cofactor>
    <text evidence="1">Binds 1 zinc ion per subunit.</text>
</comment>
<comment type="subcellular location">
    <subcellularLocation>
        <location evidence="1">Cell inner membrane</location>
        <topology evidence="1">Multi-pass membrane protein</topology>
    </subcellularLocation>
</comment>
<comment type="similarity">
    <text evidence="1">Belongs to the peptidase M48B family.</text>
</comment>
<organism>
    <name type="scientific">Rhodospirillum rubrum (strain ATCC 11170 / ATH 1.1.1 / DSM 467 / LMG 4362 / NCIMB 8255 / S1)</name>
    <dbReference type="NCBI Taxonomy" id="269796"/>
    <lineage>
        <taxon>Bacteria</taxon>
        <taxon>Pseudomonadati</taxon>
        <taxon>Pseudomonadota</taxon>
        <taxon>Alphaproteobacteria</taxon>
        <taxon>Rhodospirillales</taxon>
        <taxon>Rhodospirillaceae</taxon>
        <taxon>Rhodospirillum</taxon>
    </lineage>
</organism>
<accession>Q2RNC2</accession>
<sequence>MSFFRVAVMLAAMTGLFLAVGYLIGGQSGMVIAFLVAGGMNLFAYWNSDKMVLRMHNAREVDERSAPDLYGIVRQLTQRGGLPMPKVYVIDTPQPNAFATGRNPQNAAVAATTGLMRALTPQELAGVMAHELAHVRHHDTLTMTLTATLAGAISMLANFAFFFGGNRDNNNPLGAVGMIVMMILAPLAAMMVQMAISRTAEYRADRGGAEICGQPLWLASALEKIERAARGIENPSAEQNPATAHLFIINPLNGHRMDNLFTTHPSTANRVAKLRALASGDLAQPRPQRGPWG</sequence>
<protein>
    <recommendedName>
        <fullName evidence="1">Protease HtpX homolog</fullName>
        <ecNumber evidence="1">3.4.24.-</ecNumber>
    </recommendedName>
</protein>
<dbReference type="EC" id="3.4.24.-" evidence="1"/>
<dbReference type="EMBL" id="CP000230">
    <property type="protein sequence ID" value="ABC24373.1"/>
    <property type="molecule type" value="Genomic_DNA"/>
</dbReference>
<dbReference type="RefSeq" id="WP_011391326.1">
    <property type="nucleotide sequence ID" value="NC_007643.1"/>
</dbReference>
<dbReference type="RefSeq" id="YP_428660.1">
    <property type="nucleotide sequence ID" value="NC_007643.1"/>
</dbReference>
<dbReference type="STRING" id="269796.Rru_A3579"/>
<dbReference type="EnsemblBacteria" id="ABC24373">
    <property type="protein sequence ID" value="ABC24373"/>
    <property type="gene ID" value="Rru_A3579"/>
</dbReference>
<dbReference type="KEGG" id="rru:Rru_A3579"/>
<dbReference type="PATRIC" id="fig|269796.9.peg.3700"/>
<dbReference type="eggNOG" id="COG0501">
    <property type="taxonomic scope" value="Bacteria"/>
</dbReference>
<dbReference type="HOGENOM" id="CLU_042266_3_0_5"/>
<dbReference type="PhylomeDB" id="Q2RNC2"/>
<dbReference type="Proteomes" id="UP000001929">
    <property type="component" value="Chromosome"/>
</dbReference>
<dbReference type="GO" id="GO:0005886">
    <property type="term" value="C:plasma membrane"/>
    <property type="evidence" value="ECO:0007669"/>
    <property type="project" value="UniProtKB-SubCell"/>
</dbReference>
<dbReference type="GO" id="GO:0004222">
    <property type="term" value="F:metalloendopeptidase activity"/>
    <property type="evidence" value="ECO:0007669"/>
    <property type="project" value="UniProtKB-UniRule"/>
</dbReference>
<dbReference type="GO" id="GO:0008270">
    <property type="term" value="F:zinc ion binding"/>
    <property type="evidence" value="ECO:0007669"/>
    <property type="project" value="UniProtKB-UniRule"/>
</dbReference>
<dbReference type="GO" id="GO:0006508">
    <property type="term" value="P:proteolysis"/>
    <property type="evidence" value="ECO:0007669"/>
    <property type="project" value="UniProtKB-KW"/>
</dbReference>
<dbReference type="CDD" id="cd07336">
    <property type="entry name" value="M48B_HtpX_like"/>
    <property type="match status" value="1"/>
</dbReference>
<dbReference type="Gene3D" id="3.30.2010.10">
    <property type="entry name" value="Metalloproteases ('zincins'), catalytic domain"/>
    <property type="match status" value="1"/>
</dbReference>
<dbReference type="HAMAP" id="MF_00188">
    <property type="entry name" value="Pept_M48_protease_HtpX"/>
    <property type="match status" value="1"/>
</dbReference>
<dbReference type="InterPro" id="IPR050083">
    <property type="entry name" value="HtpX_protease"/>
</dbReference>
<dbReference type="InterPro" id="IPR022919">
    <property type="entry name" value="Pept_M48_protease_HtpX"/>
</dbReference>
<dbReference type="InterPro" id="IPR001915">
    <property type="entry name" value="Peptidase_M48"/>
</dbReference>
<dbReference type="NCBIfam" id="NF002363">
    <property type="entry name" value="PRK01345.1"/>
    <property type="match status" value="1"/>
</dbReference>
<dbReference type="NCBIfam" id="NF002826">
    <property type="entry name" value="PRK03001.1"/>
    <property type="match status" value="1"/>
</dbReference>
<dbReference type="PANTHER" id="PTHR43221">
    <property type="entry name" value="PROTEASE HTPX"/>
    <property type="match status" value="1"/>
</dbReference>
<dbReference type="PANTHER" id="PTHR43221:SF1">
    <property type="entry name" value="PROTEASE HTPX"/>
    <property type="match status" value="1"/>
</dbReference>
<dbReference type="Pfam" id="PF01435">
    <property type="entry name" value="Peptidase_M48"/>
    <property type="match status" value="1"/>
</dbReference>
<gene>
    <name evidence="1" type="primary">htpX</name>
    <name type="ordered locus">Rru_A3579</name>
</gene>